<sequence length="102" mass="11637">MPGQKIRIKLKAYDHELLDESAKKIVEVAKSTNSKVSGPIPLPTERTLYCVLRSPMKHKDSREHFEKRVHKRLIDIIDPSPKTIDALMRINLPAGVDVEIKL</sequence>
<comment type="function">
    <text evidence="1">Involved in the binding of tRNA to the ribosomes.</text>
</comment>
<comment type="subunit">
    <text evidence="1">Part of the 30S ribosomal subunit.</text>
</comment>
<comment type="similarity">
    <text evidence="1">Belongs to the universal ribosomal protein uS10 family.</text>
</comment>
<evidence type="ECO:0000255" key="1">
    <source>
        <dbReference type="HAMAP-Rule" id="MF_00508"/>
    </source>
</evidence>
<evidence type="ECO:0000305" key="2"/>
<keyword id="KW-1185">Reference proteome</keyword>
<keyword id="KW-0687">Ribonucleoprotein</keyword>
<keyword id="KW-0689">Ribosomal protein</keyword>
<name>RS10_THEMA</name>
<organism>
    <name type="scientific">Thermotoga maritima (strain ATCC 43589 / DSM 3109 / JCM 10099 / NBRC 100826 / MSB8)</name>
    <dbReference type="NCBI Taxonomy" id="243274"/>
    <lineage>
        <taxon>Bacteria</taxon>
        <taxon>Thermotogati</taxon>
        <taxon>Thermotogota</taxon>
        <taxon>Thermotogae</taxon>
        <taxon>Thermotogales</taxon>
        <taxon>Thermotogaceae</taxon>
        <taxon>Thermotoga</taxon>
    </lineage>
</organism>
<reference key="1">
    <citation type="journal article" date="1994" name="J. Bacteriol.">
        <title>Phylogenetic depth of S10 and spc operons: cloning and sequencing of a ribosomal protein gene cluster from the extremely thermophilic bacterium Thermotoga maritima.</title>
        <authorList>
            <person name="Sanangelantoni A.M."/>
            <person name="Bocchetta M."/>
            <person name="Cammarano P."/>
            <person name="Tiboni O."/>
        </authorList>
    </citation>
    <scope>NUCLEOTIDE SEQUENCE [GENOMIC DNA]</scope>
    <source>
        <strain>ATCC 43589 / DSM 3109 / JCM 10099 / NBRC 100826 / MSB8</strain>
    </source>
</reference>
<reference key="2">
    <citation type="journal article" date="1999" name="Nature">
        <title>Evidence for lateral gene transfer between Archaea and Bacteria from genome sequence of Thermotoga maritima.</title>
        <authorList>
            <person name="Nelson K.E."/>
            <person name="Clayton R.A."/>
            <person name="Gill S.R."/>
            <person name="Gwinn M.L."/>
            <person name="Dodson R.J."/>
            <person name="Haft D.H."/>
            <person name="Hickey E.K."/>
            <person name="Peterson J.D."/>
            <person name="Nelson W.C."/>
            <person name="Ketchum K.A."/>
            <person name="McDonald L.A."/>
            <person name="Utterback T.R."/>
            <person name="Malek J.A."/>
            <person name="Linher K.D."/>
            <person name="Garrett M.M."/>
            <person name="Stewart A.M."/>
            <person name="Cotton M.D."/>
            <person name="Pratt M.S."/>
            <person name="Phillips C.A."/>
            <person name="Richardson D.L."/>
            <person name="Heidelberg J.F."/>
            <person name="Sutton G.G."/>
            <person name="Fleischmann R.D."/>
            <person name="Eisen J.A."/>
            <person name="White O."/>
            <person name="Salzberg S.L."/>
            <person name="Smith H.O."/>
            <person name="Venter J.C."/>
            <person name="Fraser C.M."/>
        </authorList>
    </citation>
    <scope>NUCLEOTIDE SEQUENCE [LARGE SCALE GENOMIC DNA]</scope>
    <source>
        <strain>ATCC 43589 / DSM 3109 / JCM 10099 / NBRC 100826 / MSB8</strain>
    </source>
</reference>
<protein>
    <recommendedName>
        <fullName evidence="1">Small ribosomal subunit protein uS10</fullName>
    </recommendedName>
    <alternativeName>
        <fullName evidence="2">30S ribosomal protein S10</fullName>
    </alternativeName>
</protein>
<accession>P38518</accession>
<dbReference type="EMBL" id="Z21677">
    <property type="protein sequence ID" value="CAA79776.1"/>
    <property type="molecule type" value="Genomic_DNA"/>
</dbReference>
<dbReference type="EMBL" id="AE000512">
    <property type="protein sequence ID" value="AAD36567.1"/>
    <property type="molecule type" value="Genomic_DNA"/>
</dbReference>
<dbReference type="PIR" id="S40187">
    <property type="entry name" value="S40187"/>
</dbReference>
<dbReference type="RefSeq" id="NP_229301.1">
    <property type="nucleotide sequence ID" value="NC_000853.1"/>
</dbReference>
<dbReference type="RefSeq" id="WP_004081837.1">
    <property type="nucleotide sequence ID" value="NZ_CP011107.1"/>
</dbReference>
<dbReference type="SMR" id="P38518"/>
<dbReference type="FunCoup" id="P38518">
    <property type="interactions" value="419"/>
</dbReference>
<dbReference type="STRING" id="243274.TM_1501"/>
<dbReference type="PaxDb" id="243274-THEMA_06795"/>
<dbReference type="EnsemblBacteria" id="AAD36567">
    <property type="protein sequence ID" value="AAD36567"/>
    <property type="gene ID" value="TM_1501"/>
</dbReference>
<dbReference type="KEGG" id="tma:TM1501"/>
<dbReference type="KEGG" id="tmi:THEMA_06795"/>
<dbReference type="KEGG" id="tmm:Tmari_1509"/>
<dbReference type="KEGG" id="tmw:THMA_1533"/>
<dbReference type="eggNOG" id="COG0051">
    <property type="taxonomic scope" value="Bacteria"/>
</dbReference>
<dbReference type="InParanoid" id="P38518"/>
<dbReference type="OrthoDB" id="9804464at2"/>
<dbReference type="Proteomes" id="UP000008183">
    <property type="component" value="Chromosome"/>
</dbReference>
<dbReference type="GO" id="GO:0015935">
    <property type="term" value="C:small ribosomal subunit"/>
    <property type="evidence" value="ECO:0000318"/>
    <property type="project" value="GO_Central"/>
</dbReference>
<dbReference type="GO" id="GO:0003735">
    <property type="term" value="F:structural constituent of ribosome"/>
    <property type="evidence" value="ECO:0000318"/>
    <property type="project" value="GO_Central"/>
</dbReference>
<dbReference type="GO" id="GO:0000049">
    <property type="term" value="F:tRNA binding"/>
    <property type="evidence" value="ECO:0007669"/>
    <property type="project" value="UniProtKB-UniRule"/>
</dbReference>
<dbReference type="GO" id="GO:0006412">
    <property type="term" value="P:translation"/>
    <property type="evidence" value="ECO:0007669"/>
    <property type="project" value="UniProtKB-UniRule"/>
</dbReference>
<dbReference type="FunFam" id="3.30.70.600:FF:000001">
    <property type="entry name" value="30S ribosomal protein S10"/>
    <property type="match status" value="1"/>
</dbReference>
<dbReference type="Gene3D" id="3.30.70.600">
    <property type="entry name" value="Ribosomal protein S10 domain"/>
    <property type="match status" value="1"/>
</dbReference>
<dbReference type="HAMAP" id="MF_00508">
    <property type="entry name" value="Ribosomal_uS10"/>
    <property type="match status" value="1"/>
</dbReference>
<dbReference type="InterPro" id="IPR001848">
    <property type="entry name" value="Ribosomal_uS10"/>
</dbReference>
<dbReference type="InterPro" id="IPR018268">
    <property type="entry name" value="Ribosomal_uS10_CS"/>
</dbReference>
<dbReference type="InterPro" id="IPR027486">
    <property type="entry name" value="Ribosomal_uS10_dom"/>
</dbReference>
<dbReference type="InterPro" id="IPR036838">
    <property type="entry name" value="Ribosomal_uS10_dom_sf"/>
</dbReference>
<dbReference type="NCBIfam" id="NF001861">
    <property type="entry name" value="PRK00596.1"/>
    <property type="match status" value="1"/>
</dbReference>
<dbReference type="NCBIfam" id="TIGR01049">
    <property type="entry name" value="rpsJ_bact"/>
    <property type="match status" value="1"/>
</dbReference>
<dbReference type="PANTHER" id="PTHR11700">
    <property type="entry name" value="30S RIBOSOMAL PROTEIN S10 FAMILY MEMBER"/>
    <property type="match status" value="1"/>
</dbReference>
<dbReference type="Pfam" id="PF00338">
    <property type="entry name" value="Ribosomal_S10"/>
    <property type="match status" value="1"/>
</dbReference>
<dbReference type="PRINTS" id="PR00971">
    <property type="entry name" value="RIBOSOMALS10"/>
</dbReference>
<dbReference type="SMART" id="SM01403">
    <property type="entry name" value="Ribosomal_S10"/>
    <property type="match status" value="1"/>
</dbReference>
<dbReference type="SUPFAM" id="SSF54999">
    <property type="entry name" value="Ribosomal protein S10"/>
    <property type="match status" value="1"/>
</dbReference>
<dbReference type="PROSITE" id="PS00361">
    <property type="entry name" value="RIBOSOMAL_S10"/>
    <property type="match status" value="1"/>
</dbReference>
<gene>
    <name evidence="1" type="primary">rpsJ</name>
    <name type="ordered locus">TM_1501</name>
</gene>
<proteinExistence type="inferred from homology"/>
<feature type="chain" id="PRO_0000146618" description="Small ribosomal subunit protein uS10">
    <location>
        <begin position="1"/>
        <end position="102"/>
    </location>
</feature>